<protein>
    <recommendedName>
        <fullName evidence="1">Protoheme IX farnesyltransferase</fullName>
        <ecNumber evidence="1">2.5.1.141</ecNumber>
    </recommendedName>
    <alternativeName>
        <fullName evidence="1">Heme B farnesyltransferase</fullName>
    </alternativeName>
    <alternativeName>
        <fullName evidence="1">Heme O synthase</fullName>
    </alternativeName>
</protein>
<evidence type="ECO:0000255" key="1">
    <source>
        <dbReference type="HAMAP-Rule" id="MF_00154"/>
    </source>
</evidence>
<feature type="chain" id="PRO_0000326935" description="Protoheme IX farnesyltransferase">
    <location>
        <begin position="1"/>
        <end position="303"/>
    </location>
</feature>
<feature type="transmembrane region" description="Helical" evidence="1">
    <location>
        <begin position="26"/>
        <end position="46"/>
    </location>
</feature>
<feature type="transmembrane region" description="Helical" evidence="1">
    <location>
        <begin position="48"/>
        <end position="68"/>
    </location>
</feature>
<feature type="transmembrane region" description="Helical" evidence="1">
    <location>
        <begin position="98"/>
        <end position="118"/>
    </location>
</feature>
<feature type="transmembrane region" description="Helical" evidence="1">
    <location>
        <begin position="120"/>
        <end position="140"/>
    </location>
</feature>
<feature type="transmembrane region" description="Helical" evidence="1">
    <location>
        <begin position="148"/>
        <end position="168"/>
    </location>
</feature>
<feature type="transmembrane region" description="Helical" evidence="1">
    <location>
        <begin position="174"/>
        <end position="194"/>
    </location>
</feature>
<feature type="transmembrane region" description="Helical" evidence="1">
    <location>
        <begin position="221"/>
        <end position="241"/>
    </location>
</feature>
<feature type="transmembrane region" description="Helical" evidence="1">
    <location>
        <begin position="244"/>
        <end position="264"/>
    </location>
</feature>
<feature type="transmembrane region" description="Helical" evidence="1">
    <location>
        <begin position="278"/>
        <end position="298"/>
    </location>
</feature>
<proteinExistence type="inferred from homology"/>
<reference key="1">
    <citation type="journal article" date="2008" name="PLoS Genet.">
        <title>Complete genome sequence of the complex carbohydrate-degrading marine bacterium, Saccharophagus degradans strain 2-40 T.</title>
        <authorList>
            <person name="Weiner R.M."/>
            <person name="Taylor L.E. II"/>
            <person name="Henrissat B."/>
            <person name="Hauser L."/>
            <person name="Land M."/>
            <person name="Coutinho P.M."/>
            <person name="Rancurel C."/>
            <person name="Saunders E.H."/>
            <person name="Longmire A.G."/>
            <person name="Zhang H."/>
            <person name="Bayer E.A."/>
            <person name="Gilbert H.J."/>
            <person name="Larimer F."/>
            <person name="Zhulin I.B."/>
            <person name="Ekborg N.A."/>
            <person name="Lamed R."/>
            <person name="Richardson P.M."/>
            <person name="Borovok I."/>
            <person name="Hutcheson S."/>
        </authorList>
    </citation>
    <scope>NUCLEOTIDE SEQUENCE [LARGE SCALE GENOMIC DNA]</scope>
    <source>
        <strain>2-40 / ATCC 43961 / DSM 17024</strain>
    </source>
</reference>
<keyword id="KW-0997">Cell inner membrane</keyword>
<keyword id="KW-1003">Cell membrane</keyword>
<keyword id="KW-0350">Heme biosynthesis</keyword>
<keyword id="KW-0472">Membrane</keyword>
<keyword id="KW-1185">Reference proteome</keyword>
<keyword id="KW-0808">Transferase</keyword>
<keyword id="KW-0812">Transmembrane</keyword>
<keyword id="KW-1133">Transmembrane helix</keyword>
<comment type="function">
    <text evidence="1">Converts heme B (protoheme IX) to heme O by substitution of the vinyl group on carbon 2 of heme B porphyrin ring with a hydroxyethyl farnesyl side group.</text>
</comment>
<comment type="catalytic activity">
    <reaction evidence="1">
        <text>heme b + (2E,6E)-farnesyl diphosphate + H2O = Fe(II)-heme o + diphosphate</text>
        <dbReference type="Rhea" id="RHEA:28070"/>
        <dbReference type="ChEBI" id="CHEBI:15377"/>
        <dbReference type="ChEBI" id="CHEBI:33019"/>
        <dbReference type="ChEBI" id="CHEBI:60344"/>
        <dbReference type="ChEBI" id="CHEBI:60530"/>
        <dbReference type="ChEBI" id="CHEBI:175763"/>
        <dbReference type="EC" id="2.5.1.141"/>
    </reaction>
</comment>
<comment type="pathway">
    <text evidence="1">Porphyrin-containing compound metabolism; heme O biosynthesis; heme O from protoheme: step 1/1.</text>
</comment>
<comment type="subcellular location">
    <subcellularLocation>
        <location evidence="1">Cell inner membrane</location>
        <topology evidence="1">Multi-pass membrane protein</topology>
    </subcellularLocation>
</comment>
<comment type="miscellaneous">
    <text evidence="1">Carbon 2 of the heme B porphyrin ring is defined according to the Fischer nomenclature.</text>
</comment>
<comment type="similarity">
    <text evidence="1">Belongs to the UbiA prenyltransferase family. Protoheme IX farnesyltransferase subfamily.</text>
</comment>
<accession>Q21PS1</accession>
<organism>
    <name type="scientific">Saccharophagus degradans (strain 2-40 / ATCC 43961 / DSM 17024)</name>
    <dbReference type="NCBI Taxonomy" id="203122"/>
    <lineage>
        <taxon>Bacteria</taxon>
        <taxon>Pseudomonadati</taxon>
        <taxon>Pseudomonadota</taxon>
        <taxon>Gammaproteobacteria</taxon>
        <taxon>Cellvibrionales</taxon>
        <taxon>Cellvibrionaceae</taxon>
        <taxon>Saccharophagus</taxon>
    </lineage>
</organism>
<sequence length="303" mass="33202">MTEQASISNHDVAGWRDYLELTKPNVVALMLLTSLIGMLLAVPGMVPIDILILGNLGIALCAGSAAAVNHLVDRKVDLKMARTFNRPIAKGRIDPTKAILFAAILGLAGMAILMVWVNHLTAWLTLASLVGYAFIYTFWLKRATPQNIVIGGLAGAAPPLLGWVAVTGEVHGHALLLVLIIFAWTPPHFWALAVHRKEEYANAKIPMLPVTHGEAYTKIQILLYTFILIAVTLLPYATHMLNELYLLGAVVLGIGFLYYAVAMMRNKNKNAGMDAFKYSIVYLMALFVVMLLDHYLLPTNIVS</sequence>
<gene>
    <name evidence="1" type="primary">cyoE</name>
    <name type="ordered locus">Sde_0044</name>
</gene>
<name>CYOE_SACD2</name>
<dbReference type="EC" id="2.5.1.141" evidence="1"/>
<dbReference type="EMBL" id="CP000282">
    <property type="protein sequence ID" value="ABD79308.1"/>
    <property type="molecule type" value="Genomic_DNA"/>
</dbReference>
<dbReference type="RefSeq" id="WP_011466532.1">
    <property type="nucleotide sequence ID" value="NC_007912.1"/>
</dbReference>
<dbReference type="SMR" id="Q21PS1"/>
<dbReference type="STRING" id="203122.Sde_0044"/>
<dbReference type="GeneID" id="98611764"/>
<dbReference type="KEGG" id="sde:Sde_0044"/>
<dbReference type="eggNOG" id="COG0109">
    <property type="taxonomic scope" value="Bacteria"/>
</dbReference>
<dbReference type="HOGENOM" id="CLU_029631_0_2_6"/>
<dbReference type="OrthoDB" id="9814417at2"/>
<dbReference type="UniPathway" id="UPA00834">
    <property type="reaction ID" value="UER00712"/>
</dbReference>
<dbReference type="Proteomes" id="UP000001947">
    <property type="component" value="Chromosome"/>
</dbReference>
<dbReference type="GO" id="GO:0005886">
    <property type="term" value="C:plasma membrane"/>
    <property type="evidence" value="ECO:0007669"/>
    <property type="project" value="UniProtKB-SubCell"/>
</dbReference>
<dbReference type="GO" id="GO:0008495">
    <property type="term" value="F:protoheme IX farnesyltransferase activity"/>
    <property type="evidence" value="ECO:0007669"/>
    <property type="project" value="UniProtKB-UniRule"/>
</dbReference>
<dbReference type="GO" id="GO:0048034">
    <property type="term" value="P:heme O biosynthetic process"/>
    <property type="evidence" value="ECO:0007669"/>
    <property type="project" value="UniProtKB-UniRule"/>
</dbReference>
<dbReference type="CDD" id="cd13957">
    <property type="entry name" value="PT_UbiA_Cox10"/>
    <property type="match status" value="1"/>
</dbReference>
<dbReference type="FunFam" id="1.10.357.140:FF:000001">
    <property type="entry name" value="Protoheme IX farnesyltransferase"/>
    <property type="match status" value="1"/>
</dbReference>
<dbReference type="Gene3D" id="1.10.357.140">
    <property type="entry name" value="UbiA prenyltransferase"/>
    <property type="match status" value="1"/>
</dbReference>
<dbReference type="HAMAP" id="MF_00154">
    <property type="entry name" value="CyoE_CtaB"/>
    <property type="match status" value="1"/>
</dbReference>
<dbReference type="InterPro" id="IPR006369">
    <property type="entry name" value="Protohaem_IX_farnesylTrfase"/>
</dbReference>
<dbReference type="InterPro" id="IPR000537">
    <property type="entry name" value="UbiA_prenyltransferase"/>
</dbReference>
<dbReference type="InterPro" id="IPR044878">
    <property type="entry name" value="UbiA_sf"/>
</dbReference>
<dbReference type="NCBIfam" id="TIGR01473">
    <property type="entry name" value="cyoE_ctaB"/>
    <property type="match status" value="1"/>
</dbReference>
<dbReference type="NCBIfam" id="NF003349">
    <property type="entry name" value="PRK04375.1-2"/>
    <property type="match status" value="1"/>
</dbReference>
<dbReference type="PANTHER" id="PTHR43448:SF7">
    <property type="entry name" value="4-HYDROXYBENZOATE SOLANESYLTRANSFERASE"/>
    <property type="match status" value="1"/>
</dbReference>
<dbReference type="PANTHER" id="PTHR43448">
    <property type="entry name" value="PROTOHEME IX FARNESYLTRANSFERASE, MITOCHONDRIAL"/>
    <property type="match status" value="1"/>
</dbReference>
<dbReference type="Pfam" id="PF01040">
    <property type="entry name" value="UbiA"/>
    <property type="match status" value="1"/>
</dbReference>